<protein>
    <recommendedName>
        <fullName evidence="1">Lipoyl synthase</fullName>
        <ecNumber evidence="1">2.8.1.8</ecNumber>
    </recommendedName>
    <alternativeName>
        <fullName evidence="1">Lip-syn</fullName>
        <shortName evidence="1">LS</shortName>
    </alternativeName>
    <alternativeName>
        <fullName evidence="1">Lipoate synthase</fullName>
    </alternativeName>
    <alternativeName>
        <fullName evidence="1">Lipoic acid synthase</fullName>
    </alternativeName>
    <alternativeName>
        <fullName evidence="1">Sulfur insertion protein LipA</fullName>
    </alternativeName>
</protein>
<sequence>MNSGPGKKPDWLKIKLTSGSSFASTKKLLNKHSLHTVCRSAMCPNLHECWSKGTATFLLLGNVCTRSCRFCAVGTERRPAMPDPEETAKIGEAVKAMKLRHAVLTSVNRDDLADGGAAHWVETIRAIREVNPGVSIECLIPDFQGDEQALDSVMRERPEVLNHNIETVPSRYASVRPQASYERSLAVIERAKRQFRLATKSGMMVGMGETPEEVNAALRDLRAHGCDMVTIGQYLQPTATHLPVSRYVTPEEFERYREIALDAGFRHVQSGPFVRSSYHAEAFEPVEEISNS</sequence>
<keyword id="KW-0004">4Fe-4S</keyword>
<keyword id="KW-0963">Cytoplasm</keyword>
<keyword id="KW-0408">Iron</keyword>
<keyword id="KW-0411">Iron-sulfur</keyword>
<keyword id="KW-0479">Metal-binding</keyword>
<keyword id="KW-0949">S-adenosyl-L-methionine</keyword>
<keyword id="KW-0808">Transferase</keyword>
<accession>B3QNE9</accession>
<comment type="function">
    <text evidence="1">Catalyzes the radical-mediated insertion of two sulfur atoms into the C-6 and C-8 positions of the octanoyl moiety bound to the lipoyl domains of lipoate-dependent enzymes, thereby converting the octanoylated domains into lipoylated derivatives.</text>
</comment>
<comment type="catalytic activity">
    <reaction evidence="1">
        <text>[[Fe-S] cluster scaffold protein carrying a second [4Fe-4S](2+) cluster] + N(6)-octanoyl-L-lysyl-[protein] + 2 oxidized [2Fe-2S]-[ferredoxin] + 2 S-adenosyl-L-methionine + 4 H(+) = [[Fe-S] cluster scaffold protein] + N(6)-[(R)-dihydrolipoyl]-L-lysyl-[protein] + 4 Fe(3+) + 2 hydrogen sulfide + 2 5'-deoxyadenosine + 2 L-methionine + 2 reduced [2Fe-2S]-[ferredoxin]</text>
        <dbReference type="Rhea" id="RHEA:16585"/>
        <dbReference type="Rhea" id="RHEA-COMP:9928"/>
        <dbReference type="Rhea" id="RHEA-COMP:10000"/>
        <dbReference type="Rhea" id="RHEA-COMP:10001"/>
        <dbReference type="Rhea" id="RHEA-COMP:10475"/>
        <dbReference type="Rhea" id="RHEA-COMP:14568"/>
        <dbReference type="Rhea" id="RHEA-COMP:14569"/>
        <dbReference type="ChEBI" id="CHEBI:15378"/>
        <dbReference type="ChEBI" id="CHEBI:17319"/>
        <dbReference type="ChEBI" id="CHEBI:29034"/>
        <dbReference type="ChEBI" id="CHEBI:29919"/>
        <dbReference type="ChEBI" id="CHEBI:33722"/>
        <dbReference type="ChEBI" id="CHEBI:33737"/>
        <dbReference type="ChEBI" id="CHEBI:33738"/>
        <dbReference type="ChEBI" id="CHEBI:57844"/>
        <dbReference type="ChEBI" id="CHEBI:59789"/>
        <dbReference type="ChEBI" id="CHEBI:78809"/>
        <dbReference type="ChEBI" id="CHEBI:83100"/>
        <dbReference type="EC" id="2.8.1.8"/>
    </reaction>
</comment>
<comment type="cofactor">
    <cofactor evidence="1">
        <name>[4Fe-4S] cluster</name>
        <dbReference type="ChEBI" id="CHEBI:49883"/>
    </cofactor>
    <text evidence="1">Binds 2 [4Fe-4S] clusters per subunit. One cluster is coordinated with 3 cysteines and an exchangeable S-adenosyl-L-methionine.</text>
</comment>
<comment type="pathway">
    <text evidence="1">Protein modification; protein lipoylation via endogenous pathway; protein N(6)-(lipoyl)lysine from octanoyl-[acyl-carrier-protein]: step 2/2.</text>
</comment>
<comment type="subcellular location">
    <subcellularLocation>
        <location evidence="1">Cytoplasm</location>
    </subcellularLocation>
</comment>
<comment type="similarity">
    <text evidence="1">Belongs to the radical SAM superfamily. Lipoyl synthase family.</text>
</comment>
<proteinExistence type="inferred from homology"/>
<organism>
    <name type="scientific">Chlorobaculum parvum (strain DSM 263 / NCIMB 8327)</name>
    <name type="common">Chlorobium vibrioforme subsp. thiosulfatophilum</name>
    <dbReference type="NCBI Taxonomy" id="517417"/>
    <lineage>
        <taxon>Bacteria</taxon>
        <taxon>Pseudomonadati</taxon>
        <taxon>Chlorobiota</taxon>
        <taxon>Chlorobiia</taxon>
        <taxon>Chlorobiales</taxon>
        <taxon>Chlorobiaceae</taxon>
        <taxon>Chlorobaculum</taxon>
    </lineage>
</organism>
<reference key="1">
    <citation type="submission" date="2008-06" db="EMBL/GenBank/DDBJ databases">
        <title>Complete sequence of Chlorobaculum parvum NCIB 8327.</title>
        <authorList>
            <consortium name="US DOE Joint Genome Institute"/>
            <person name="Lucas S."/>
            <person name="Copeland A."/>
            <person name="Lapidus A."/>
            <person name="Glavina del Rio T."/>
            <person name="Dalin E."/>
            <person name="Tice H."/>
            <person name="Bruce D."/>
            <person name="Goodwin L."/>
            <person name="Pitluck S."/>
            <person name="Schmutz J."/>
            <person name="Larimer F."/>
            <person name="Land M."/>
            <person name="Hauser L."/>
            <person name="Kyrpides N."/>
            <person name="Mikhailova N."/>
            <person name="Zhao F."/>
            <person name="Li T."/>
            <person name="Liu Z."/>
            <person name="Overmann J."/>
            <person name="Bryant D.A."/>
            <person name="Richardson P."/>
        </authorList>
    </citation>
    <scope>NUCLEOTIDE SEQUENCE [LARGE SCALE GENOMIC DNA]</scope>
    <source>
        <strain>DSM 263 / NCIMB 8327</strain>
    </source>
</reference>
<evidence type="ECO:0000255" key="1">
    <source>
        <dbReference type="HAMAP-Rule" id="MF_00206"/>
    </source>
</evidence>
<evidence type="ECO:0000255" key="2">
    <source>
        <dbReference type="PROSITE-ProRule" id="PRU01266"/>
    </source>
</evidence>
<gene>
    <name evidence="1" type="primary">lipA</name>
    <name type="ordered locus">Cpar_1044</name>
</gene>
<name>LIPA_CHLP8</name>
<feature type="chain" id="PRO_1000099593" description="Lipoyl synthase">
    <location>
        <begin position="1"/>
        <end position="292"/>
    </location>
</feature>
<feature type="domain" description="Radical SAM core" evidence="2">
    <location>
        <begin position="50"/>
        <end position="266"/>
    </location>
</feature>
<feature type="binding site" evidence="1">
    <location>
        <position position="38"/>
    </location>
    <ligand>
        <name>[4Fe-4S] cluster</name>
        <dbReference type="ChEBI" id="CHEBI:49883"/>
        <label>1</label>
    </ligand>
</feature>
<feature type="binding site" evidence="1">
    <location>
        <position position="43"/>
    </location>
    <ligand>
        <name>[4Fe-4S] cluster</name>
        <dbReference type="ChEBI" id="CHEBI:49883"/>
        <label>1</label>
    </ligand>
</feature>
<feature type="binding site" evidence="1">
    <location>
        <position position="49"/>
    </location>
    <ligand>
        <name>[4Fe-4S] cluster</name>
        <dbReference type="ChEBI" id="CHEBI:49883"/>
        <label>1</label>
    </ligand>
</feature>
<feature type="binding site" evidence="1">
    <location>
        <position position="64"/>
    </location>
    <ligand>
        <name>[4Fe-4S] cluster</name>
        <dbReference type="ChEBI" id="CHEBI:49883"/>
        <label>2</label>
        <note>4Fe-4S-S-AdoMet</note>
    </ligand>
</feature>
<feature type="binding site" evidence="1">
    <location>
        <position position="68"/>
    </location>
    <ligand>
        <name>[4Fe-4S] cluster</name>
        <dbReference type="ChEBI" id="CHEBI:49883"/>
        <label>2</label>
        <note>4Fe-4S-S-AdoMet</note>
    </ligand>
</feature>
<feature type="binding site" evidence="1">
    <location>
        <position position="71"/>
    </location>
    <ligand>
        <name>[4Fe-4S] cluster</name>
        <dbReference type="ChEBI" id="CHEBI:49883"/>
        <label>2</label>
        <note>4Fe-4S-S-AdoMet</note>
    </ligand>
</feature>
<feature type="binding site" evidence="1">
    <location>
        <position position="277"/>
    </location>
    <ligand>
        <name>[4Fe-4S] cluster</name>
        <dbReference type="ChEBI" id="CHEBI:49883"/>
        <label>1</label>
    </ligand>
</feature>
<dbReference type="EC" id="2.8.1.8" evidence="1"/>
<dbReference type="EMBL" id="CP001099">
    <property type="protein sequence ID" value="ACF11452.1"/>
    <property type="molecule type" value="Genomic_DNA"/>
</dbReference>
<dbReference type="RefSeq" id="WP_012502285.1">
    <property type="nucleotide sequence ID" value="NC_011027.1"/>
</dbReference>
<dbReference type="SMR" id="B3QNE9"/>
<dbReference type="STRING" id="517417.Cpar_1044"/>
<dbReference type="KEGG" id="cpc:Cpar_1044"/>
<dbReference type="eggNOG" id="COG0320">
    <property type="taxonomic scope" value="Bacteria"/>
</dbReference>
<dbReference type="HOGENOM" id="CLU_033144_2_0_10"/>
<dbReference type="OrthoDB" id="9787898at2"/>
<dbReference type="UniPathway" id="UPA00538">
    <property type="reaction ID" value="UER00593"/>
</dbReference>
<dbReference type="Proteomes" id="UP000008811">
    <property type="component" value="Chromosome"/>
</dbReference>
<dbReference type="GO" id="GO:0005737">
    <property type="term" value="C:cytoplasm"/>
    <property type="evidence" value="ECO:0007669"/>
    <property type="project" value="UniProtKB-SubCell"/>
</dbReference>
<dbReference type="GO" id="GO:0051539">
    <property type="term" value="F:4 iron, 4 sulfur cluster binding"/>
    <property type="evidence" value="ECO:0007669"/>
    <property type="project" value="UniProtKB-UniRule"/>
</dbReference>
<dbReference type="GO" id="GO:0016992">
    <property type="term" value="F:lipoate synthase activity"/>
    <property type="evidence" value="ECO:0007669"/>
    <property type="project" value="UniProtKB-UniRule"/>
</dbReference>
<dbReference type="GO" id="GO:0046872">
    <property type="term" value="F:metal ion binding"/>
    <property type="evidence" value="ECO:0007669"/>
    <property type="project" value="UniProtKB-KW"/>
</dbReference>
<dbReference type="CDD" id="cd01335">
    <property type="entry name" value="Radical_SAM"/>
    <property type="match status" value="1"/>
</dbReference>
<dbReference type="FunFam" id="3.20.20.70:FF:000040">
    <property type="entry name" value="Lipoyl synthase"/>
    <property type="match status" value="1"/>
</dbReference>
<dbReference type="Gene3D" id="3.20.20.70">
    <property type="entry name" value="Aldolase class I"/>
    <property type="match status" value="1"/>
</dbReference>
<dbReference type="HAMAP" id="MF_00206">
    <property type="entry name" value="Lipoyl_synth"/>
    <property type="match status" value="1"/>
</dbReference>
<dbReference type="InterPro" id="IPR013785">
    <property type="entry name" value="Aldolase_TIM"/>
</dbReference>
<dbReference type="InterPro" id="IPR006638">
    <property type="entry name" value="Elp3/MiaA/NifB-like_rSAM"/>
</dbReference>
<dbReference type="InterPro" id="IPR003698">
    <property type="entry name" value="Lipoyl_synth"/>
</dbReference>
<dbReference type="InterPro" id="IPR007197">
    <property type="entry name" value="rSAM"/>
</dbReference>
<dbReference type="NCBIfam" id="TIGR00510">
    <property type="entry name" value="lipA"/>
    <property type="match status" value="1"/>
</dbReference>
<dbReference type="NCBIfam" id="NF004019">
    <property type="entry name" value="PRK05481.1"/>
    <property type="match status" value="1"/>
</dbReference>
<dbReference type="NCBIfam" id="NF009544">
    <property type="entry name" value="PRK12928.1"/>
    <property type="match status" value="1"/>
</dbReference>
<dbReference type="PANTHER" id="PTHR10949">
    <property type="entry name" value="LIPOYL SYNTHASE"/>
    <property type="match status" value="1"/>
</dbReference>
<dbReference type="PANTHER" id="PTHR10949:SF0">
    <property type="entry name" value="LIPOYL SYNTHASE, MITOCHONDRIAL"/>
    <property type="match status" value="1"/>
</dbReference>
<dbReference type="Pfam" id="PF04055">
    <property type="entry name" value="Radical_SAM"/>
    <property type="match status" value="1"/>
</dbReference>
<dbReference type="PIRSF" id="PIRSF005963">
    <property type="entry name" value="Lipoyl_synth"/>
    <property type="match status" value="1"/>
</dbReference>
<dbReference type="SFLD" id="SFLDF00271">
    <property type="entry name" value="lipoyl_synthase"/>
    <property type="match status" value="1"/>
</dbReference>
<dbReference type="SFLD" id="SFLDS00029">
    <property type="entry name" value="Radical_SAM"/>
    <property type="match status" value="1"/>
</dbReference>
<dbReference type="SMART" id="SM00729">
    <property type="entry name" value="Elp3"/>
    <property type="match status" value="1"/>
</dbReference>
<dbReference type="SUPFAM" id="SSF102114">
    <property type="entry name" value="Radical SAM enzymes"/>
    <property type="match status" value="1"/>
</dbReference>
<dbReference type="PROSITE" id="PS51918">
    <property type="entry name" value="RADICAL_SAM"/>
    <property type="match status" value="1"/>
</dbReference>